<feature type="chain" id="PRO_0000443369" description="Gag-Pol polyprotein">
    <location>
        <begin position="1"/>
        <end position="1506"/>
    </location>
</feature>
<feature type="chain" id="PRO_0000443370" description="Matrix protein p16">
    <location>
        <begin position="1"/>
        <end position="143"/>
    </location>
</feature>
<feature type="chain" id="PRO_0000443371" description="Capsid protein p25">
    <location>
        <begin position="144"/>
        <end position="363"/>
    </location>
</feature>
<feature type="chain" id="PRO_0000443372" description="Nucleocapsid protein p14">
    <location>
        <begin position="364"/>
        <end position="442"/>
    </location>
</feature>
<feature type="chain" id="PRO_0000038869" description="Protease">
    <location>
        <begin position="443"/>
        <end position="540"/>
    </location>
</feature>
<feature type="chain" id="PRO_0000038870" description="Reverse transcriptase/ribonuclease H">
    <location>
        <begin position="541"/>
        <end position="1091"/>
    </location>
</feature>
<feature type="chain" id="PRO_0000038871" description="Deoxyuridine 5'-triphosphate nucleotidohydrolase">
    <location>
        <begin position="1092"/>
        <end position="1225"/>
    </location>
</feature>
<feature type="chain" id="PRO_0000038872" description="Integrase">
    <location>
        <begin position="1226"/>
        <end position="1506"/>
    </location>
</feature>
<feature type="domain" description="Peptidase A2" evidence="6">
    <location>
        <begin position="459"/>
        <end position="530"/>
    </location>
</feature>
<feature type="domain" description="Reverse transcriptase" evidence="7">
    <location>
        <begin position="587"/>
        <end position="776"/>
    </location>
</feature>
<feature type="domain" description="RNase H type-1" evidence="8">
    <location>
        <begin position="971"/>
        <end position="1093"/>
    </location>
</feature>
<feature type="domain" description="Integrase catalytic" evidence="10">
    <location>
        <begin position="1270"/>
        <end position="1430"/>
    </location>
</feature>
<feature type="zinc finger region" description="CCHC-type 1" evidence="5">
    <location>
        <begin position="385"/>
        <end position="402"/>
    </location>
</feature>
<feature type="zinc finger region" description="CCHC-type 2" evidence="5">
    <location>
        <begin position="404"/>
        <end position="421"/>
    </location>
</feature>
<feature type="zinc finger region" description="Integrase-type" evidence="9">
    <location>
        <begin position="1228"/>
        <end position="1269"/>
    </location>
</feature>
<feature type="DNA-binding region" description="Integrase-type" evidence="11">
    <location>
        <begin position="1447"/>
        <end position="1499"/>
    </location>
</feature>
<feature type="active site" description="Protease; shared with dimeric partner" evidence="6">
    <location>
        <position position="464"/>
    </location>
</feature>
<feature type="binding site" evidence="7">
    <location>
        <position position="652"/>
    </location>
    <ligand>
        <name>Mg(2+)</name>
        <dbReference type="ChEBI" id="CHEBI:18420"/>
        <label>1</label>
        <note>catalytic; for reverse transcriptase activity</note>
    </ligand>
</feature>
<feature type="binding site" evidence="7">
    <location>
        <position position="727"/>
    </location>
    <ligand>
        <name>Mg(2+)</name>
        <dbReference type="ChEBI" id="CHEBI:18420"/>
        <label>1</label>
        <note>catalytic; for reverse transcriptase activity</note>
    </ligand>
</feature>
<feature type="binding site" evidence="7">
    <location>
        <position position="728"/>
    </location>
    <ligand>
        <name>Mg(2+)</name>
        <dbReference type="ChEBI" id="CHEBI:18420"/>
        <label>1</label>
        <note>catalytic; for reverse transcriptase activity</note>
    </ligand>
</feature>
<feature type="binding site" evidence="8">
    <location>
        <position position="980"/>
    </location>
    <ligand>
        <name>Mg(2+)</name>
        <dbReference type="ChEBI" id="CHEBI:18420"/>
        <label>2</label>
        <note>catalytic; for RNase H activity</note>
    </ligand>
</feature>
<feature type="binding site" evidence="8">
    <location>
        <position position="1012"/>
    </location>
    <ligand>
        <name>Mg(2+)</name>
        <dbReference type="ChEBI" id="CHEBI:18420"/>
        <label>2</label>
        <note>catalytic; for RNase H activity</note>
    </ligand>
</feature>
<feature type="binding site" evidence="8">
    <location>
        <position position="1032"/>
    </location>
    <ligand>
        <name>Mg(2+)</name>
        <dbReference type="ChEBI" id="CHEBI:18420"/>
        <label>2</label>
        <note>catalytic; for RNase H activity</note>
    </ligand>
</feature>
<feature type="binding site" evidence="8">
    <location>
        <position position="1085"/>
    </location>
    <ligand>
        <name>Mg(2+)</name>
        <dbReference type="ChEBI" id="CHEBI:18420"/>
        <label>2</label>
        <note>catalytic; for RNase H activity</note>
    </ligand>
</feature>
<feature type="binding site" evidence="9">
    <location>
        <position position="1237"/>
    </location>
    <ligand>
        <name>Zn(2+)</name>
        <dbReference type="ChEBI" id="CHEBI:29105"/>
    </ligand>
</feature>
<feature type="binding site" evidence="9">
    <location>
        <position position="1241"/>
    </location>
    <ligand>
        <name>Zn(2+)</name>
        <dbReference type="ChEBI" id="CHEBI:29105"/>
    </ligand>
</feature>
<feature type="binding site" evidence="9">
    <location>
        <position position="1265"/>
    </location>
    <ligand>
        <name>Zn(2+)</name>
        <dbReference type="ChEBI" id="CHEBI:29105"/>
    </ligand>
</feature>
<feature type="binding site" evidence="9">
    <location>
        <position position="1268"/>
    </location>
    <ligand>
        <name>Zn(2+)</name>
        <dbReference type="ChEBI" id="CHEBI:29105"/>
    </ligand>
</feature>
<feature type="binding site" evidence="10">
    <location>
        <position position="1291"/>
    </location>
    <ligand>
        <name>Mg(2+)</name>
        <dbReference type="ChEBI" id="CHEBI:18420"/>
        <label>3</label>
        <note>catalytic; for integrase activity</note>
    </ligand>
</feature>
<feature type="binding site" evidence="10">
    <location>
        <position position="1343"/>
    </location>
    <ligand>
        <name>Mg(2+)</name>
        <dbReference type="ChEBI" id="CHEBI:18420"/>
        <label>3</label>
        <note>catalytic; for integrase activity</note>
    </ligand>
</feature>
<feature type="binding site" evidence="13">
    <location>
        <position position="1379"/>
    </location>
    <ligand>
        <name>Mg(2+)</name>
        <dbReference type="ChEBI" id="CHEBI:18420"/>
        <label>3</label>
        <note>catalytic; for integrase activity</note>
    </ligand>
</feature>
<feature type="site" description="Cleavage; by viral protease" evidence="4">
    <location>
        <begin position="363"/>
        <end position="364"/>
    </location>
</feature>
<feature type="turn" evidence="19">
    <location>
        <begin position="1227"/>
        <end position="1229"/>
    </location>
</feature>
<feature type="helix" evidence="16">
    <location>
        <begin position="1230"/>
        <end position="1240"/>
    </location>
</feature>
<feature type="helix" evidence="16">
    <location>
        <begin position="1244"/>
        <end position="1250"/>
    </location>
</feature>
<feature type="helix" evidence="16">
    <location>
        <begin position="1255"/>
        <end position="1262"/>
    </location>
</feature>
<feature type="helix" evidence="15">
    <location>
        <begin position="1266"/>
        <end position="1269"/>
    </location>
</feature>
<feature type="strand" evidence="18">
    <location>
        <begin position="1287"/>
        <end position="1295"/>
    </location>
</feature>
<feature type="strand" evidence="18">
    <location>
        <begin position="1298"/>
        <end position="1305"/>
    </location>
</feature>
<feature type="turn" evidence="18">
    <location>
        <begin position="1306"/>
        <end position="1308"/>
    </location>
</feature>
<feature type="strand" evidence="18">
    <location>
        <begin position="1311"/>
        <end position="1317"/>
    </location>
</feature>
<feature type="helix" evidence="18">
    <location>
        <begin position="1321"/>
        <end position="1335"/>
    </location>
</feature>
<feature type="strand" evidence="18">
    <location>
        <begin position="1339"/>
        <end position="1342"/>
    </location>
</feature>
<feature type="helix" evidence="18">
    <location>
        <begin position="1346"/>
        <end position="1349"/>
    </location>
</feature>
<feature type="helix" evidence="18">
    <location>
        <begin position="1351"/>
        <end position="1359"/>
    </location>
</feature>
<feature type="strand" evidence="18">
    <location>
        <begin position="1363"/>
        <end position="1367"/>
    </location>
</feature>
<feature type="helix" evidence="18">
    <location>
        <begin position="1372"/>
        <end position="1392"/>
    </location>
</feature>
<feature type="helix" evidence="18">
    <location>
        <begin position="1393"/>
        <end position="1395"/>
    </location>
</feature>
<feature type="helix" evidence="18">
    <location>
        <begin position="1399"/>
        <end position="1411"/>
    </location>
</feature>
<feature type="turn" evidence="15">
    <location>
        <begin position="1417"/>
        <end position="1419"/>
    </location>
</feature>
<feature type="helix" evidence="18">
    <location>
        <begin position="1422"/>
        <end position="1440"/>
    </location>
</feature>
<feature type="strand" evidence="17">
    <location>
        <begin position="1448"/>
        <end position="1451"/>
    </location>
</feature>
<feature type="strand" evidence="17">
    <location>
        <begin position="1463"/>
        <end position="1467"/>
    </location>
</feature>
<feature type="strand" evidence="19">
    <location>
        <begin position="1469"/>
        <end position="1471"/>
    </location>
</feature>
<feature type="strand" evidence="17">
    <location>
        <begin position="1473"/>
        <end position="1480"/>
    </location>
</feature>
<feature type="turn" evidence="17">
    <location>
        <begin position="1481"/>
        <end position="1484"/>
    </location>
</feature>
<feature type="strand" evidence="17">
    <location>
        <begin position="1485"/>
        <end position="1490"/>
    </location>
</feature>
<feature type="helix" evidence="17">
    <location>
        <begin position="1491"/>
        <end position="1493"/>
    </location>
</feature>
<feature type="strand" evidence="17">
    <location>
        <begin position="1494"/>
        <end position="1497"/>
    </location>
</feature>
<organism>
    <name type="scientific">Maedi visna virus (strain KV1772)</name>
    <name type="common">MVV</name>
    <name type="synonym">Visna lentivirus</name>
    <dbReference type="NCBI Taxonomy" id="36374"/>
    <lineage>
        <taxon>Viruses</taxon>
        <taxon>Riboviria</taxon>
        <taxon>Pararnavirae</taxon>
        <taxon>Artverviricota</taxon>
        <taxon>Revtraviricetes</taxon>
        <taxon>Ortervirales</taxon>
        <taxon>Retroviridae</taxon>
        <taxon>Orthoretrovirinae</taxon>
        <taxon>Lentivirus</taxon>
        <taxon>Visna-maedi virus</taxon>
    </lineage>
</organism>
<organismHost>
    <name type="scientific">Ovis aries</name>
    <name type="common">Sheep</name>
    <dbReference type="NCBI Taxonomy" id="9940"/>
</organismHost>
<keyword id="KW-0002">3D-structure</keyword>
<keyword id="KW-0064">Aspartyl protease</keyword>
<keyword id="KW-0167">Capsid protein</keyword>
<keyword id="KW-0229">DNA integration</keyword>
<keyword id="KW-0233">DNA recombination</keyword>
<keyword id="KW-0238">DNA-binding</keyword>
<keyword id="KW-0255">Endonuclease</keyword>
<keyword id="KW-0378">Hydrolase</keyword>
<keyword id="KW-0460">Magnesium</keyword>
<keyword id="KW-0479">Metal-binding</keyword>
<keyword id="KW-0511">Multifunctional enzyme</keyword>
<keyword id="KW-0540">Nuclease</keyword>
<keyword id="KW-0546">Nucleotide metabolism</keyword>
<keyword id="KW-0548">Nucleotidyltransferase</keyword>
<keyword id="KW-0645">Protease</keyword>
<keyword id="KW-0677">Repeat</keyword>
<keyword id="KW-0688">Ribosomal frameshifting</keyword>
<keyword id="KW-0695">RNA-directed DNA polymerase</keyword>
<keyword id="KW-0808">Transferase</keyword>
<keyword id="KW-1179">Viral genome integration</keyword>
<keyword id="KW-0946">Virion</keyword>
<keyword id="KW-1160">Virus entry into host cell</keyword>
<keyword id="KW-0862">Zinc</keyword>
<keyword id="KW-0863">Zinc-finger</keyword>
<evidence type="ECO:0000250" key="1">
    <source>
        <dbReference type="UniProtKB" id="P03370"/>
    </source>
</evidence>
<evidence type="ECO:0000250" key="2">
    <source>
        <dbReference type="UniProtKB" id="P04585"/>
    </source>
</evidence>
<evidence type="ECO:0000250" key="3">
    <source>
        <dbReference type="UniProtKB" id="P12497"/>
    </source>
</evidence>
<evidence type="ECO:0000250" key="4">
    <source>
        <dbReference type="UniProtKB" id="P35955"/>
    </source>
</evidence>
<evidence type="ECO:0000255" key="5">
    <source>
        <dbReference type="PROSITE-ProRule" id="PRU00047"/>
    </source>
</evidence>
<evidence type="ECO:0000255" key="6">
    <source>
        <dbReference type="PROSITE-ProRule" id="PRU00275"/>
    </source>
</evidence>
<evidence type="ECO:0000255" key="7">
    <source>
        <dbReference type="PROSITE-ProRule" id="PRU00405"/>
    </source>
</evidence>
<evidence type="ECO:0000255" key="8">
    <source>
        <dbReference type="PROSITE-ProRule" id="PRU00408"/>
    </source>
</evidence>
<evidence type="ECO:0000255" key="9">
    <source>
        <dbReference type="PROSITE-ProRule" id="PRU00450"/>
    </source>
</evidence>
<evidence type="ECO:0000255" key="10">
    <source>
        <dbReference type="PROSITE-ProRule" id="PRU00457"/>
    </source>
</evidence>
<evidence type="ECO:0000255" key="11">
    <source>
        <dbReference type="PROSITE-ProRule" id="PRU00506"/>
    </source>
</evidence>
<evidence type="ECO:0000269" key="12">
    <source>
    </source>
</evidence>
<evidence type="ECO:0000305" key="13"/>
<evidence type="ECO:0000305" key="14">
    <source>
    </source>
</evidence>
<evidence type="ECO:0007829" key="15">
    <source>
        <dbReference type="PDB" id="3HPG"/>
    </source>
</evidence>
<evidence type="ECO:0007829" key="16">
    <source>
        <dbReference type="PDB" id="3HPH"/>
    </source>
</evidence>
<evidence type="ECO:0007829" key="17">
    <source>
        <dbReference type="PDB" id="5LLJ"/>
    </source>
</evidence>
<evidence type="ECO:0007829" key="18">
    <source>
        <dbReference type="PDB" id="5T3A"/>
    </source>
</evidence>
<evidence type="ECO:0007829" key="19">
    <source>
        <dbReference type="PDB" id="7Z1Z"/>
    </source>
</evidence>
<accession>P35956</accession>
<protein>
    <recommendedName>
        <fullName>Gag-Pol polyprotein</fullName>
    </recommendedName>
    <component>
        <recommendedName>
            <fullName>Matrix protein p16</fullName>
        </recommendedName>
    </component>
    <component>
        <recommendedName>
            <fullName>Capsid protein p25</fullName>
        </recommendedName>
    </component>
    <component>
        <recommendedName>
            <fullName>Nucleocapsid protein p14</fullName>
        </recommendedName>
    </component>
    <component>
        <recommendedName>
            <fullName>Protease</fullName>
            <ecNumber evidence="6">3.4.23.-</ecNumber>
        </recommendedName>
        <alternativeName>
            <fullName>Retropepsin</fullName>
        </alternativeName>
    </component>
    <component>
        <recommendedName>
            <fullName>Reverse transcriptase/ribonuclease H</fullName>
            <shortName>RT</shortName>
            <ecNumber evidence="7">2.7.7.49</ecNumber>
            <ecNumber evidence="7">2.7.7.7</ecNumber>
            <ecNumber evidence="8">3.1.26.4</ecNumber>
        </recommendedName>
        <alternativeName>
            <fullName>Exoribonuclease H</fullName>
            <ecNumber>3.1.13.2</ecNumber>
        </alternativeName>
    </component>
    <component>
        <recommendedName>
            <fullName>Deoxyuridine 5'-triphosphate nucleotidohydrolase</fullName>
            <shortName>dUTPase</shortName>
            <ecNumber evidence="13">3.6.1.23</ecNumber>
        </recommendedName>
    </component>
    <component>
        <recommendedName>
            <fullName>Integrase</fullName>
            <shortName>IN</shortName>
            <ecNumber evidence="1">2.7.7.-</ecNumber>
            <ecNumber evidence="1">3.1.-.-</ecNumber>
        </recommendedName>
    </component>
</protein>
<sequence length="1506" mass="171957">MAKQGSKEKKGYPELKEVIKATCKIRVGPGKETLTEGNCLWALKTIDFIFEDLKTEPWTITKMYTVWDRLKGLTPEETSKREFASLQATLACIMCSQMGMKPETVQAAKGIISMKEGLHENKEAKGEKVEQLYPNLEKHREVYPIVNLQAGGRSWKAVESVVFQQLQTVAMQHGLVSEDFERQLAYYATTWTSKDILEVLAMMPGNRAQKELIQGKLNEEAERWVRQNPPGPNVLTVDQIMGVGQTNQQASQANMDQARQICLQWVITALRSVRHMSHRPGNPMLVKQKNTESYEDFIARLLEAIDAEPVTDPIKTYLKVTLSYTNASTDCQKQMDRTLGTRVQQATVEEKMQACRDVGSEGFKMQLLAQALRPQGKAGQKGVNQKCYNCGKPGHLARQCRQGIICHHCGKRGHMQKDCRQKKQQGKQQEGATCGAVRAPYVVTEAPPKIEIKVGTRWKKLLVDTGADKTIVTSHDMSGIPKGRIILQGIGGIIEGEKWEQVHLQYKDKIIRGTIVVLATSPVEVLGRDNMRELGIGLIMANLEEKKIPSTRVRLKEGCKGPHIAQWPLTQEKLEGLKEIVDRLEKEGKVGRAPPHWTCNTPIFCIKKKSGKWRMLIDFRELNKQTEDLAEAQLGLPHPGGLQRKKHVTILDIGDAYFTIPLYEPYRQYTCFTMLSPNNLGPCVRYYWKVLPQGWKLSPAVYQFTMQKILRGWIEEHPMIQFGIYMDDIYIGSDLGLEEHRGIVNELASYIAQYGFMLPEDKRQEGYPAKWLGFELHPEKWKFQKHTLPEITEGPITLNKLQKLVGDLVWRQSLIGKSIPNILKLMEGDRALQSERYIESIHVREWEACRQKLKEMEGNYYDEEKDIYGQLDWGNKAIEYIVFQEKGKPLWVNVVHSIKNLSQAQQIIKAAQKLTQEVIIRTGKIPWILLPGREEDWILELQMGNINWMPSFWSCYKGSVRWKKRNVIAEVVPGPTYYTDGGKKNGRGSLGYITSTGEKFRIHEEGTNQQLELRAIEEACKQGPEKMNIVTDSRYAYEFMLRNWDEEVIRNPIQARIMELVHNKEKIGVHWVPGHKGIPQNEEIDRYISEIFLAKEGRGILQKRAEDAGYDLICPQEISIPAGQVKRIAIDLKINLKKDQWAMIGTKSSFANKGVFVQGGIIDSGYQGTIQVVIYNSNNKEVVIPQGRKFAQLILMPLIHEELEPWGETRKTERGEQGFGSTGMYWIENIPLAEEEHNKWHQDAVSLHLEFGIPRTAAEDIVQQCDVCQENKMPSTLRGSNKRGIDHWQVDYTHYEDKIILVWVETNSGLIYAERVKGETGQEFRVQTMKWYAMFAPKSLQSDNGPAFVAESTQLLMKYLGIEHTTGIPWNPQSQALVERTHQTLKNTLEKLIPMFNAFESALAGTLITLNIKRKGGLGTSPMDIFIFNKEQQRIQQQSKSKQEKIRFCYYRTRKRGHPGEWQGPTQVLWGGDGAIVVKDRGTDRYLVIANKDVKFIPPPKEIQKE</sequence>
<dbReference type="EC" id="3.4.23.-" evidence="6"/>
<dbReference type="EC" id="2.7.7.49" evidence="7"/>
<dbReference type="EC" id="2.7.7.7" evidence="7"/>
<dbReference type="EC" id="3.1.26.4" evidence="8"/>
<dbReference type="EC" id="3.1.13.2"/>
<dbReference type="EC" id="3.6.1.23" evidence="13"/>
<dbReference type="EC" id="2.7.7.-" evidence="1"/>
<dbReference type="EC" id="3.1.-.-" evidence="1"/>
<dbReference type="EMBL" id="L06906">
    <property type="protein sequence ID" value="AAA48359.1"/>
    <property type="status" value="ALT_SEQ"/>
    <property type="molecule type" value="Genomic_RNA"/>
</dbReference>
<dbReference type="EMBL" id="S55323">
    <property type="protein sequence ID" value="AAB25460.1"/>
    <property type="status" value="ALT_SEQ"/>
    <property type="molecule type" value="Genomic_DNA"/>
</dbReference>
<dbReference type="PDB" id="3HPG">
    <property type="method" value="X-ray"/>
    <property type="resolution" value="3.28 A"/>
    <property type="chains" value="A/B/C/D/E/F=1228-1445"/>
</dbReference>
<dbReference type="PDB" id="3HPH">
    <property type="method" value="X-ray"/>
    <property type="resolution" value="2.64 A"/>
    <property type="chains" value="A/B/C/D=1228-1445"/>
</dbReference>
<dbReference type="PDB" id="5LLJ">
    <property type="method" value="X-ray"/>
    <property type="resolution" value="1.78 A"/>
    <property type="chains" value="A/B=1444-1501"/>
</dbReference>
<dbReference type="PDB" id="5M0R">
    <property type="method" value="EM"/>
    <property type="resolution" value="8.20 A"/>
    <property type="chains" value="A/B/C/D/E/F/G/H/I/J/K/L/M/N/O/P=1228-1506"/>
</dbReference>
<dbReference type="PDB" id="5T3A">
    <property type="method" value="X-ray"/>
    <property type="resolution" value="2.50 A"/>
    <property type="chains" value="A=1285-1506"/>
</dbReference>
<dbReference type="PDB" id="7U32">
    <property type="method" value="EM"/>
    <property type="resolution" value="3.46 A"/>
    <property type="chains" value="A/B/C/D/E/F/G/H/I/J/K/L/M/N/O/P=1226-1506"/>
</dbReference>
<dbReference type="PDB" id="7Z1Z">
    <property type="method" value="EM"/>
    <property type="resolution" value="3.50 A"/>
    <property type="chains" value="A/B/C/D/E/F/G/H/I/J/K/L/M/N/O/P=1226-1506"/>
</dbReference>
<dbReference type="PDB" id="7ZPP">
    <property type="method" value="EM"/>
    <property type="resolution" value="4.50 A"/>
    <property type="chains" value="A/B/C/D/E/F/G/H/I/J/K/L/M/N/O/P=1226-1506"/>
</dbReference>
<dbReference type="PDBsum" id="3HPG"/>
<dbReference type="PDBsum" id="3HPH"/>
<dbReference type="PDBsum" id="5LLJ"/>
<dbReference type="PDBsum" id="5M0R"/>
<dbReference type="PDBsum" id="5T3A"/>
<dbReference type="PDBsum" id="7U32"/>
<dbReference type="PDBsum" id="7Z1Z"/>
<dbReference type="PDBsum" id="7ZPP"/>
<dbReference type="EMDB" id="EMD-14453"/>
<dbReference type="EMDB" id="EMD-14860"/>
<dbReference type="EMDB" id="EMD-26322"/>
<dbReference type="EMDB" id="EMD-4139"/>
<dbReference type="SMR" id="P35956"/>
<dbReference type="MEROPS" id="A02.006"/>
<dbReference type="KEGG" id="vg:1490013"/>
<dbReference type="EvolutionaryTrace" id="P35956"/>
<dbReference type="Proteomes" id="UP000202605">
    <property type="component" value="Segment"/>
</dbReference>
<dbReference type="GO" id="GO:0019028">
    <property type="term" value="C:viral capsid"/>
    <property type="evidence" value="ECO:0007669"/>
    <property type="project" value="UniProtKB-KW"/>
</dbReference>
<dbReference type="GO" id="GO:0004190">
    <property type="term" value="F:aspartic-type endopeptidase activity"/>
    <property type="evidence" value="ECO:0007669"/>
    <property type="project" value="UniProtKB-KW"/>
</dbReference>
<dbReference type="GO" id="GO:0003677">
    <property type="term" value="F:DNA binding"/>
    <property type="evidence" value="ECO:0007669"/>
    <property type="project" value="UniProtKB-KW"/>
</dbReference>
<dbReference type="GO" id="GO:0003887">
    <property type="term" value="F:DNA-directed DNA polymerase activity"/>
    <property type="evidence" value="ECO:0007669"/>
    <property type="project" value="UniProtKB-EC"/>
</dbReference>
<dbReference type="GO" id="GO:0004170">
    <property type="term" value="F:dUTP diphosphatase activity"/>
    <property type="evidence" value="ECO:0007669"/>
    <property type="project" value="UniProtKB-EC"/>
</dbReference>
<dbReference type="GO" id="GO:0004533">
    <property type="term" value="F:exoribonuclease H activity"/>
    <property type="evidence" value="ECO:0007669"/>
    <property type="project" value="UniProtKB-EC"/>
</dbReference>
<dbReference type="GO" id="GO:0035613">
    <property type="term" value="F:RNA stem-loop binding"/>
    <property type="evidence" value="ECO:0007669"/>
    <property type="project" value="TreeGrafter"/>
</dbReference>
<dbReference type="GO" id="GO:0003964">
    <property type="term" value="F:RNA-directed DNA polymerase activity"/>
    <property type="evidence" value="ECO:0007669"/>
    <property type="project" value="UniProtKB-KW"/>
</dbReference>
<dbReference type="GO" id="GO:0004523">
    <property type="term" value="F:RNA-DNA hybrid ribonuclease activity"/>
    <property type="evidence" value="ECO:0007669"/>
    <property type="project" value="UniProtKB-EC"/>
</dbReference>
<dbReference type="GO" id="GO:0008270">
    <property type="term" value="F:zinc ion binding"/>
    <property type="evidence" value="ECO:0007669"/>
    <property type="project" value="UniProtKB-KW"/>
</dbReference>
<dbReference type="GO" id="GO:0015074">
    <property type="term" value="P:DNA integration"/>
    <property type="evidence" value="ECO:0007669"/>
    <property type="project" value="UniProtKB-KW"/>
</dbReference>
<dbReference type="GO" id="GO:0006310">
    <property type="term" value="P:DNA recombination"/>
    <property type="evidence" value="ECO:0007669"/>
    <property type="project" value="UniProtKB-KW"/>
</dbReference>
<dbReference type="GO" id="GO:0075713">
    <property type="term" value="P:establishment of integrated proviral latency"/>
    <property type="evidence" value="ECO:0007669"/>
    <property type="project" value="UniProtKB-KW"/>
</dbReference>
<dbReference type="GO" id="GO:0009117">
    <property type="term" value="P:nucleotide metabolic process"/>
    <property type="evidence" value="ECO:0007669"/>
    <property type="project" value="UniProtKB-KW"/>
</dbReference>
<dbReference type="GO" id="GO:0006508">
    <property type="term" value="P:proteolysis"/>
    <property type="evidence" value="ECO:0007669"/>
    <property type="project" value="UniProtKB-KW"/>
</dbReference>
<dbReference type="GO" id="GO:0046718">
    <property type="term" value="P:symbiont entry into host cell"/>
    <property type="evidence" value="ECO:0007669"/>
    <property type="project" value="UniProtKB-KW"/>
</dbReference>
<dbReference type="GO" id="GO:0044826">
    <property type="term" value="P:viral genome integration into host DNA"/>
    <property type="evidence" value="ECO:0007669"/>
    <property type="project" value="UniProtKB-KW"/>
</dbReference>
<dbReference type="GO" id="GO:0075523">
    <property type="term" value="P:viral translational frameshifting"/>
    <property type="evidence" value="ECO:0007669"/>
    <property type="project" value="UniProtKB-KW"/>
</dbReference>
<dbReference type="CDD" id="cd07557">
    <property type="entry name" value="trimeric_dUTPase"/>
    <property type="match status" value="1"/>
</dbReference>
<dbReference type="Gene3D" id="1.10.10.200">
    <property type="match status" value="1"/>
</dbReference>
<dbReference type="Gene3D" id="1.10.1200.30">
    <property type="match status" value="1"/>
</dbReference>
<dbReference type="Gene3D" id="2.70.40.10">
    <property type="match status" value="1"/>
</dbReference>
<dbReference type="Gene3D" id="3.30.70.270">
    <property type="match status" value="3"/>
</dbReference>
<dbReference type="Gene3D" id="2.40.70.10">
    <property type="entry name" value="Acid Proteases"/>
    <property type="match status" value="1"/>
</dbReference>
<dbReference type="Gene3D" id="3.10.10.10">
    <property type="entry name" value="HIV Type 1 Reverse Transcriptase, subunit A, domain 1"/>
    <property type="match status" value="1"/>
</dbReference>
<dbReference type="Gene3D" id="1.10.375.10">
    <property type="entry name" value="Human Immunodeficiency Virus Type 1 Capsid Protein"/>
    <property type="match status" value="1"/>
</dbReference>
<dbReference type="Gene3D" id="2.30.30.10">
    <property type="entry name" value="Integrase, C-terminal domain superfamily, retroviral"/>
    <property type="match status" value="1"/>
</dbReference>
<dbReference type="Gene3D" id="3.30.420.10">
    <property type="entry name" value="Ribonuclease H-like superfamily/Ribonuclease H"/>
    <property type="match status" value="2"/>
</dbReference>
<dbReference type="Gene3D" id="4.10.60.10">
    <property type="entry name" value="Zinc finger, CCHC-type"/>
    <property type="match status" value="1"/>
</dbReference>
<dbReference type="InterPro" id="IPR001969">
    <property type="entry name" value="Aspartic_peptidase_AS"/>
</dbReference>
<dbReference type="InterPro" id="IPR043502">
    <property type="entry name" value="DNA/RNA_pol_sf"/>
</dbReference>
<dbReference type="InterPro" id="IPR029054">
    <property type="entry name" value="dUTPase-like"/>
</dbReference>
<dbReference type="InterPro" id="IPR036157">
    <property type="entry name" value="dUTPase-like_sf"/>
</dbReference>
<dbReference type="InterPro" id="IPR033704">
    <property type="entry name" value="dUTPase_trimeric"/>
</dbReference>
<dbReference type="InterPro" id="IPR045345">
    <property type="entry name" value="Gag_p24_C"/>
</dbReference>
<dbReference type="InterPro" id="IPR017856">
    <property type="entry name" value="Integrase-like_N"/>
</dbReference>
<dbReference type="InterPro" id="IPR036862">
    <property type="entry name" value="Integrase_C_dom_sf_retrovir"/>
</dbReference>
<dbReference type="InterPro" id="IPR001037">
    <property type="entry name" value="Integrase_C_retrovir"/>
</dbReference>
<dbReference type="InterPro" id="IPR001584">
    <property type="entry name" value="Integrase_cat-core"/>
</dbReference>
<dbReference type="InterPro" id="IPR003308">
    <property type="entry name" value="Integrase_Zn-bd_dom_N"/>
</dbReference>
<dbReference type="InterPro" id="IPR001995">
    <property type="entry name" value="Peptidase_A2_cat"/>
</dbReference>
<dbReference type="InterPro" id="IPR021109">
    <property type="entry name" value="Peptidase_aspartic_dom_sf"/>
</dbReference>
<dbReference type="InterPro" id="IPR018061">
    <property type="entry name" value="Retropepsins"/>
</dbReference>
<dbReference type="InterPro" id="IPR008916">
    <property type="entry name" value="Retrov_capsid_C"/>
</dbReference>
<dbReference type="InterPro" id="IPR008919">
    <property type="entry name" value="Retrov_capsid_N"/>
</dbReference>
<dbReference type="InterPro" id="IPR043128">
    <property type="entry name" value="Rev_trsase/Diguanyl_cyclase"/>
</dbReference>
<dbReference type="InterPro" id="IPR012337">
    <property type="entry name" value="RNaseH-like_sf"/>
</dbReference>
<dbReference type="InterPro" id="IPR002156">
    <property type="entry name" value="RNaseH_domain"/>
</dbReference>
<dbReference type="InterPro" id="IPR036397">
    <property type="entry name" value="RNaseH_sf"/>
</dbReference>
<dbReference type="InterPro" id="IPR000477">
    <property type="entry name" value="RT_dom"/>
</dbReference>
<dbReference type="InterPro" id="IPR001878">
    <property type="entry name" value="Znf_CCHC"/>
</dbReference>
<dbReference type="InterPro" id="IPR036875">
    <property type="entry name" value="Znf_CCHC_sf"/>
</dbReference>
<dbReference type="PANTHER" id="PTHR41694">
    <property type="entry name" value="ENDOGENOUS RETROVIRUS GROUP K MEMBER POL PROTEIN"/>
    <property type="match status" value="1"/>
</dbReference>
<dbReference type="PANTHER" id="PTHR41694:SF3">
    <property type="entry name" value="RNA-DIRECTED DNA POLYMERASE-RELATED"/>
    <property type="match status" value="1"/>
</dbReference>
<dbReference type="Pfam" id="PF00692">
    <property type="entry name" value="dUTPase"/>
    <property type="match status" value="1"/>
</dbReference>
<dbReference type="Pfam" id="PF00607">
    <property type="entry name" value="Gag_p24"/>
    <property type="match status" value="1"/>
</dbReference>
<dbReference type="Pfam" id="PF19317">
    <property type="entry name" value="Gag_p24_C"/>
    <property type="match status" value="1"/>
</dbReference>
<dbReference type="Pfam" id="PF02022">
    <property type="entry name" value="Integrase_Zn"/>
    <property type="match status" value="1"/>
</dbReference>
<dbReference type="Pfam" id="PF00075">
    <property type="entry name" value="RNase_H"/>
    <property type="match status" value="1"/>
</dbReference>
<dbReference type="Pfam" id="PF00665">
    <property type="entry name" value="rve"/>
    <property type="match status" value="1"/>
</dbReference>
<dbReference type="Pfam" id="PF00077">
    <property type="entry name" value="RVP"/>
    <property type="match status" value="1"/>
</dbReference>
<dbReference type="Pfam" id="PF00078">
    <property type="entry name" value="RVT_1"/>
    <property type="match status" value="1"/>
</dbReference>
<dbReference type="Pfam" id="PF00098">
    <property type="entry name" value="zf-CCHC"/>
    <property type="match status" value="2"/>
</dbReference>
<dbReference type="SMART" id="SM00343">
    <property type="entry name" value="ZnF_C2HC"/>
    <property type="match status" value="2"/>
</dbReference>
<dbReference type="SUPFAM" id="SSF50630">
    <property type="entry name" value="Acid proteases"/>
    <property type="match status" value="1"/>
</dbReference>
<dbReference type="SUPFAM" id="SSF50122">
    <property type="entry name" value="DNA-binding domain of retroviral integrase"/>
    <property type="match status" value="1"/>
</dbReference>
<dbReference type="SUPFAM" id="SSF56672">
    <property type="entry name" value="DNA/RNA polymerases"/>
    <property type="match status" value="1"/>
</dbReference>
<dbReference type="SUPFAM" id="SSF51283">
    <property type="entry name" value="dUTPase-like"/>
    <property type="match status" value="1"/>
</dbReference>
<dbReference type="SUPFAM" id="SSF46919">
    <property type="entry name" value="N-terminal Zn binding domain of HIV integrase"/>
    <property type="match status" value="1"/>
</dbReference>
<dbReference type="SUPFAM" id="SSF47353">
    <property type="entry name" value="Retrovirus capsid dimerization domain-like"/>
    <property type="match status" value="1"/>
</dbReference>
<dbReference type="SUPFAM" id="SSF47943">
    <property type="entry name" value="Retrovirus capsid protein, N-terminal core domain"/>
    <property type="match status" value="1"/>
</dbReference>
<dbReference type="SUPFAM" id="SSF57756">
    <property type="entry name" value="Retrovirus zinc finger-like domains"/>
    <property type="match status" value="1"/>
</dbReference>
<dbReference type="SUPFAM" id="SSF53098">
    <property type="entry name" value="Ribonuclease H-like"/>
    <property type="match status" value="2"/>
</dbReference>
<dbReference type="PROSITE" id="PS50175">
    <property type="entry name" value="ASP_PROT_RETROV"/>
    <property type="match status" value="1"/>
</dbReference>
<dbReference type="PROSITE" id="PS00141">
    <property type="entry name" value="ASP_PROTEASE"/>
    <property type="match status" value="1"/>
</dbReference>
<dbReference type="PROSITE" id="PS50994">
    <property type="entry name" value="INTEGRASE"/>
    <property type="match status" value="1"/>
</dbReference>
<dbReference type="PROSITE" id="PS51027">
    <property type="entry name" value="INTEGRASE_DBD"/>
    <property type="match status" value="1"/>
</dbReference>
<dbReference type="PROSITE" id="PS50879">
    <property type="entry name" value="RNASE_H_1"/>
    <property type="match status" value="1"/>
</dbReference>
<dbReference type="PROSITE" id="PS50878">
    <property type="entry name" value="RT_POL"/>
    <property type="match status" value="1"/>
</dbReference>
<dbReference type="PROSITE" id="PS50158">
    <property type="entry name" value="ZF_CCHC"/>
    <property type="match status" value="2"/>
</dbReference>
<dbReference type="PROSITE" id="PS50876">
    <property type="entry name" value="ZF_INTEGRASE"/>
    <property type="match status" value="1"/>
</dbReference>
<comment type="function">
    <molecule>Gag-Pol polyprotein</molecule>
    <text evidence="2">Mediates, with Gag polyprotein, the essential events in virion assembly, including binding the plasma membrane, making the protein-protein interactions necessary to create spherical particles, recruiting the viral Env proteins, and packaging the genomic RNA via direct interactions with the RNA packaging sequence.</text>
</comment>
<comment type="function">
    <molecule>Matrix protein p16</molecule>
    <text evidence="3">Targets the polyprotein to the plasma membrane.</text>
</comment>
<comment type="function">
    <molecule>Capsid protein p25</molecule>
    <text evidence="2">Forms the core that encapsulates the genomic RNA-nucleocapsid complex in the virion.</text>
</comment>
<comment type="function">
    <molecule>Nucleocapsid protein p14</molecule>
    <text evidence="2">Encapsulates and protects viral dimeric unspliced genomic RNA (gRNA). Binds these RNAs through its zinc fingers. Acts as a nucleic acid chaperone which is involved in rearrangement of nucleic acid secondary structure during gRNA retrotranscription. Also facilitates template switch leading to recombination.</text>
</comment>
<comment type="function">
    <molecule>Protease</molecule>
    <text evidence="6">The aspartyl protease mediates proteolytic cleavages of Gag and Gag-Pol polyproteins during or shortly after the release of the virion from the plasma membrane. Cleavages take place as an ordered, step-wise cascade to yield mature proteins. This process is called maturation. Displays maximal activity during the budding process just prior to particle release from the cell.</text>
</comment>
<comment type="function">
    <molecule>Reverse transcriptase/ribonuclease H</molecule>
    <text evidence="7">RT is a multifunctional enzyme that converts the viral dimeric RNA genome into dsDNA in the cytoplasm, shortly after virus entry into the cell. This enzyme displays a DNA polymerase activity that can copy either DNA or RNA templates, and a ribonuclease H (RNase H) activity that cleaves the RNA strand of RNA-DNA heteroduplexes in a partially processive 3' to 5' endonucleasic mode. Conversion of viral genomic RNA into dsDNA requires many steps. A tRNA binds to the primer-binding site (PBS) situated at the 5' end of the viral RNA. RT uses the 3' end of the tRNA primer to perfom a short round of RNA-dependent minus-strand DNA synthesis. The reading proceeds through the U5 region and ends after the repeated (R) region which is present at both ends of viral RNA. The portion of the RNA-DNA heteroduplex is digested by the RNase H, resulting in a ssDNA product attached to the tRNA primer. This ssDNA/tRNA hybridizes with the identical R region situated at the 3' end of viral RNA. This template exchange, known as minus-strand DNA strong stop transfer, can be either intra- or intermolecular. RT uses the 3' end of this newly synthesized short ssDNA to perfom the RNA-dependent minus-strand DNA synthesis of the whole template. RNase H digests the RNA template except for a polypurine tract (PPT) situated at the 5' end of the genome. It is not clear if both polymerase and RNase H activities are simultaneous. RNase H probably can proceed both in a polymerase-dependent (RNA cut into small fragments by the same RT performing DNA synthesis) and a polymerase-independent mode (cleavage of remaining RNA fragments by free RTs). Secondly, RT performs DNA-directed plus-strand DNA synthesis using the PPT that has not been removed by RNase H as primers. PPT and tRNA primers are then removed by RNase H. The 3' and 5' ssDNA PBS regions hybridize to form a circular dsDNA intermediate. Strand displacement synthesis by RT to the PBS and PPT ends produces a blunt ended, linear dsDNA copy of the viral genome that includes long terminal repeats (LTRs) at both ends.</text>
</comment>
<comment type="function">
    <molecule>Integrase</molecule>
    <text evidence="1">Catalyzes viral DNA integration into the host chromosome, by performing a series of DNA cutting and joining reactions.</text>
</comment>
<comment type="catalytic activity">
    <reaction>
        <text>3'-end directed exonucleolytic cleavage of viral RNA-DNA hybrid.</text>
        <dbReference type="EC" id="3.1.13.2"/>
    </reaction>
</comment>
<comment type="catalytic activity">
    <reaction evidence="8">
        <text>Endonucleolytic cleavage to 5'-phosphomonoester.</text>
        <dbReference type="EC" id="3.1.26.4"/>
    </reaction>
</comment>
<comment type="catalytic activity">
    <reaction>
        <text>dUTP + H2O = dUMP + diphosphate + H(+)</text>
        <dbReference type="Rhea" id="RHEA:10248"/>
        <dbReference type="ChEBI" id="CHEBI:15377"/>
        <dbReference type="ChEBI" id="CHEBI:15378"/>
        <dbReference type="ChEBI" id="CHEBI:33019"/>
        <dbReference type="ChEBI" id="CHEBI:61555"/>
        <dbReference type="ChEBI" id="CHEBI:246422"/>
        <dbReference type="EC" id="3.6.1.23"/>
    </reaction>
</comment>
<comment type="catalytic activity">
    <reaction evidence="7">
        <text>DNA(n) + a 2'-deoxyribonucleoside 5'-triphosphate = DNA(n+1) + diphosphate</text>
        <dbReference type="Rhea" id="RHEA:22508"/>
        <dbReference type="Rhea" id="RHEA-COMP:17339"/>
        <dbReference type="Rhea" id="RHEA-COMP:17340"/>
        <dbReference type="ChEBI" id="CHEBI:33019"/>
        <dbReference type="ChEBI" id="CHEBI:61560"/>
        <dbReference type="ChEBI" id="CHEBI:173112"/>
        <dbReference type="EC" id="2.7.7.49"/>
    </reaction>
</comment>
<comment type="catalytic activity">
    <reaction evidence="7">
        <text>DNA(n) + a 2'-deoxyribonucleoside 5'-triphosphate = DNA(n+1) + diphosphate</text>
        <dbReference type="Rhea" id="RHEA:22508"/>
        <dbReference type="Rhea" id="RHEA-COMP:17339"/>
        <dbReference type="Rhea" id="RHEA-COMP:17340"/>
        <dbReference type="ChEBI" id="CHEBI:33019"/>
        <dbReference type="ChEBI" id="CHEBI:61560"/>
        <dbReference type="ChEBI" id="CHEBI:173112"/>
        <dbReference type="EC" id="2.7.7.7"/>
    </reaction>
</comment>
<comment type="cofactor">
    <cofactor evidence="7">
        <name>Mg(2+)</name>
        <dbReference type="ChEBI" id="CHEBI:18420"/>
    </cofactor>
    <text evidence="7">The RT polymerase active site binds 2 magnesium ions.</text>
</comment>
<comment type="subunit">
    <molecule>Integrase</molecule>
    <text evidence="12">Homotetramer; further associates as a homohexadecamer.</text>
</comment>
<comment type="subcellular location">
    <molecule>Matrix protein p16</molecule>
    <subcellularLocation>
        <location evidence="13">Virion</location>
    </subcellularLocation>
</comment>
<comment type="subcellular location">
    <molecule>Capsid protein p25</molecule>
    <subcellularLocation>
        <location evidence="13">Virion</location>
    </subcellularLocation>
</comment>
<comment type="subcellular location">
    <molecule>Nucleocapsid protein p14</molecule>
    <subcellularLocation>
        <location evidence="13">Virion</location>
    </subcellularLocation>
</comment>
<comment type="alternative products">
    <event type="ribosomal frameshifting"/>
    <isoform>
        <id>P35956-1</id>
        <name>Gag-Pol polyprotein</name>
        <sequence type="displayed"/>
    </isoform>
    <isoform>
        <id>P35955-1</id>
        <name>Gag polyprotein</name>
        <sequence type="external"/>
    </isoform>
</comment>
<comment type="PTM">
    <molecule>Gag-Pol polyprotein</molecule>
    <text evidence="13">Specific enzymatic cleavages by the viral protease yield mature proteins.</text>
</comment>
<comment type="miscellaneous">
    <text evidence="7">The reverse transcriptase is an error-prone enzyme that lacks a proof-reading function. High mutations rate is a direct consequence of this characteristic. RT also displays frequent template switching leading to high recombination rate. Recombination mostly occurs between homologous regions of the two copackaged RNA genomes. If these two RNA molecules derive from different viral strains, reverse transcription will give rise to highly recombinated proviral DNAs.</text>
</comment>
<comment type="miscellaneous">
    <molecule>Isoform Gag-Pol polyprotein</molecule>
    <text evidence="14">Produced by a -1 ribosomal frameshifting between gag and pol.</text>
</comment>
<comment type="similarity">
    <text evidence="13">Belongs to the retroviral Pol polyprotein family.</text>
</comment>
<comment type="sequence caution" evidence="13">
    <conflict type="erroneous gene model prediction">
        <sequence resource="EMBL-CDS" id="AAA48359"/>
    </conflict>
</comment>
<comment type="sequence caution" evidence="13">
    <conflict type="erroneous gene model prediction">
        <sequence resource="EMBL-CDS" id="AAB25460"/>
    </conflict>
</comment>
<gene>
    <name type="primary">pol</name>
</gene>
<reference key="1">
    <citation type="journal article" date="1993" name="Virology">
        <title>Nucleotide sequence and biological properties of a pathogenic proviral molecular clone of neurovirulent visna virus.</title>
        <authorList>
            <person name="Andresson O.S."/>
            <person name="Elser J.E."/>
            <person name="Tobin G.J."/>
            <person name="Greenwood J.D."/>
            <person name="Gonda M.A."/>
            <person name="Georgsson G."/>
            <person name="Andresdottir V."/>
            <person name="Benediktsdottir E."/>
            <person name="Carlsdottir H.M."/>
            <person name="Maentylae E.O."/>
            <person name="Rafnar B."/>
            <person name="Palsson P.A."/>
            <person name="Casey J.W."/>
            <person name="Petursson G."/>
        </authorList>
    </citation>
    <scope>NUCLEOTIDE SEQUENCE [GENOMIC RNA]</scope>
</reference>
<reference key="2">
    <citation type="journal article" date="2008" name="RNA">
        <title>The stimulatory RNA of the Visna-Maedi retrovirus ribosomal frameshifting signal is an unusual pseudoknot with an interstem element.</title>
        <authorList>
            <person name="Pennell S."/>
            <person name="Manktelow E."/>
            <person name="Flatt A."/>
            <person name="Kelly G."/>
            <person name="Smerdon S.J."/>
            <person name="Brierley I."/>
        </authorList>
    </citation>
    <scope>RIBOSOMAL FRAMESHIFTING</scope>
</reference>
<reference key="3">
    <citation type="journal article" date="2017" name="Science">
        <title>A supramolecular assembly mediates lentiviral DNA integration.</title>
        <authorList>
            <person name="Ballandras-Colas A."/>
            <person name="Maskell D.P."/>
            <person name="Serrao E."/>
            <person name="Locke J."/>
            <person name="Swuec P."/>
            <person name="Jonsson S.R."/>
            <person name="Kotecha A."/>
            <person name="Cook N.J."/>
            <person name="Pye V.E."/>
            <person name="Taylor I.A."/>
            <person name="Andresdottir V."/>
            <person name="Engelman A.N."/>
            <person name="Costa A."/>
            <person name="Cherepanov P."/>
        </authorList>
    </citation>
    <scope>X-RAY CRYSTALLOGRAPHY (4.9 ANGSTROMS) OF 1228-1506</scope>
    <scope>SUBUNIT (INTEGRASE)</scope>
</reference>
<proteinExistence type="evidence at protein level"/>
<name>POL_VILVK</name>